<feature type="chain" id="PRO_0000174940" description="Thymidine kinase">
    <location>
        <begin position="1"/>
        <end position="177"/>
    </location>
</feature>
<feature type="active site" description="Proton acceptor" evidence="2">
    <location>
        <position position="83"/>
    </location>
</feature>
<feature type="binding site" evidence="2">
    <location>
        <begin position="11"/>
        <end position="18"/>
    </location>
    <ligand>
        <name>ATP</name>
        <dbReference type="ChEBI" id="CHEBI:30616"/>
    </ligand>
</feature>
<feature type="binding site" evidence="2">
    <location>
        <position position="113"/>
    </location>
    <ligand>
        <name>substrate</name>
    </ligand>
</feature>
<feature type="binding site" evidence="2">
    <location>
        <position position="138"/>
    </location>
    <ligand>
        <name>Zn(2+)</name>
        <dbReference type="ChEBI" id="CHEBI:29105"/>
    </ligand>
</feature>
<feature type="binding site" evidence="2">
    <location>
        <position position="141"/>
    </location>
    <ligand>
        <name>Zn(2+)</name>
        <dbReference type="ChEBI" id="CHEBI:29105"/>
    </ligand>
</feature>
<feature type="binding site" evidence="2">
    <location>
        <begin position="157"/>
        <end position="161"/>
    </location>
    <ligand>
        <name>substrate</name>
    </ligand>
</feature>
<feature type="binding site" evidence="2">
    <location>
        <position position="170"/>
    </location>
    <ligand>
        <name>Zn(2+)</name>
        <dbReference type="ChEBI" id="CHEBI:29105"/>
    </ligand>
</feature>
<feature type="binding site" evidence="2">
    <location>
        <position position="173"/>
    </location>
    <ligand>
        <name>Zn(2+)</name>
        <dbReference type="ChEBI" id="CHEBI:29105"/>
    </ligand>
</feature>
<feature type="disulfide bond" description="Interchain (with C-173)" evidence="2">
    <location>
        <position position="170"/>
    </location>
</feature>
<feature type="disulfide bond" description="Interchain (with C-170)" evidence="2">
    <location>
        <position position="173"/>
    </location>
</feature>
<evidence type="ECO:0000250" key="1"/>
<evidence type="ECO:0000250" key="2">
    <source>
        <dbReference type="UniProtKB" id="O57203"/>
    </source>
</evidence>
<evidence type="ECO:0000269" key="3">
    <source>
    </source>
</evidence>
<evidence type="ECO:0000305" key="4"/>
<protein>
    <recommendedName>
        <fullName>Thymidine kinase</fullName>
        <ecNumber>2.7.1.21</ecNumber>
    </recommendedName>
</protein>
<accession>P68563</accession>
<accession>P03297</accession>
<accession>Q76ZT2</accession>
<organism>
    <name type="scientific">Vaccinia virus (strain Western Reserve)</name>
    <name type="common">VACV</name>
    <name type="synonym">Vaccinia virus (strain WR)</name>
    <dbReference type="NCBI Taxonomy" id="10254"/>
    <lineage>
        <taxon>Viruses</taxon>
        <taxon>Varidnaviria</taxon>
        <taxon>Bamfordvirae</taxon>
        <taxon>Nucleocytoviricota</taxon>
        <taxon>Pokkesviricetes</taxon>
        <taxon>Chitovirales</taxon>
        <taxon>Poxviridae</taxon>
        <taxon>Chordopoxvirinae</taxon>
        <taxon>Orthopoxvirus</taxon>
        <taxon>Vaccinia virus</taxon>
    </lineage>
</organism>
<comment type="function">
    <text evidence="2">Phosphorylates thymidine and thymidine analogs, such as azidothymidine (AZT). Part of the salvage pathway for pyrimidine deoxyribonucleotide synthesis.</text>
</comment>
<comment type="catalytic activity">
    <reaction evidence="2">
        <text>thymidine + ATP = dTMP + ADP + H(+)</text>
        <dbReference type="Rhea" id="RHEA:19129"/>
        <dbReference type="ChEBI" id="CHEBI:15378"/>
        <dbReference type="ChEBI" id="CHEBI:17748"/>
        <dbReference type="ChEBI" id="CHEBI:30616"/>
        <dbReference type="ChEBI" id="CHEBI:63528"/>
        <dbReference type="ChEBI" id="CHEBI:456216"/>
        <dbReference type="EC" id="2.7.1.21"/>
    </reaction>
</comment>
<comment type="biophysicochemical properties">
    <kinetics>
        <KM evidence="3">25 uM for 2'deoxythymidine</KM>
    </kinetics>
</comment>
<comment type="subunit">
    <text evidence="1">Homotetramer. Two molecules of substrate bind to each enzyme tetramer.</text>
</comment>
<comment type="similarity">
    <text evidence="4">Belongs to the thymidine kinase family.</text>
</comment>
<keyword id="KW-0067">ATP-binding</keyword>
<keyword id="KW-1015">Disulfide bond</keyword>
<keyword id="KW-0237">DNA synthesis</keyword>
<keyword id="KW-0418">Kinase</keyword>
<keyword id="KW-0479">Metal-binding</keyword>
<keyword id="KW-0547">Nucleotide-binding</keyword>
<keyword id="KW-1185">Reference proteome</keyword>
<keyword id="KW-0808">Transferase</keyword>
<keyword id="KW-0862">Zinc</keyword>
<proteinExistence type="evidence at protein level"/>
<organismHost>
    <name type="scientific">Bos taurus</name>
    <name type="common">Bovine</name>
    <dbReference type="NCBI Taxonomy" id="9913"/>
</organismHost>
<name>KITH_VACCW</name>
<dbReference type="EC" id="2.7.1.21"/>
<dbReference type="EMBL" id="X01978">
    <property type="protein sequence ID" value="CAA26016.1"/>
    <property type="molecule type" value="Genomic_DNA"/>
</dbReference>
<dbReference type="EMBL" id="AY243312">
    <property type="protein sequence ID" value="AAO89373.1"/>
    <property type="molecule type" value="Genomic_DNA"/>
</dbReference>
<dbReference type="PIR" id="A00609">
    <property type="entry name" value="KIVZ"/>
</dbReference>
<dbReference type="RefSeq" id="YP_232976.1">
    <property type="nucleotide sequence ID" value="NC_006998.1"/>
</dbReference>
<dbReference type="SMR" id="P68563"/>
<dbReference type="MINT" id="P68563"/>
<dbReference type="ChEMBL" id="CHEMBL1075034"/>
<dbReference type="DNASU" id="3707550"/>
<dbReference type="GeneID" id="3707550"/>
<dbReference type="KEGG" id="vg:3707550"/>
<dbReference type="SABIO-RK" id="P68563"/>
<dbReference type="Proteomes" id="UP000000344">
    <property type="component" value="Genome"/>
</dbReference>
<dbReference type="GO" id="GO:0005524">
    <property type="term" value="F:ATP binding"/>
    <property type="evidence" value="ECO:0007669"/>
    <property type="project" value="UniProtKB-KW"/>
</dbReference>
<dbReference type="GO" id="GO:0046872">
    <property type="term" value="F:metal ion binding"/>
    <property type="evidence" value="ECO:0007669"/>
    <property type="project" value="UniProtKB-KW"/>
</dbReference>
<dbReference type="GO" id="GO:0004797">
    <property type="term" value="F:thymidine kinase activity"/>
    <property type="evidence" value="ECO:0007669"/>
    <property type="project" value="UniProtKB-EC"/>
</dbReference>
<dbReference type="GO" id="GO:0071897">
    <property type="term" value="P:DNA biosynthetic process"/>
    <property type="evidence" value="ECO:0007669"/>
    <property type="project" value="UniProtKB-KW"/>
</dbReference>
<dbReference type="GO" id="GO:0046104">
    <property type="term" value="P:thymidine metabolic process"/>
    <property type="evidence" value="ECO:0007669"/>
    <property type="project" value="TreeGrafter"/>
</dbReference>
<dbReference type="FunFam" id="3.30.60.20:FF:000028">
    <property type="entry name" value="Thymidine kinase"/>
    <property type="match status" value="1"/>
</dbReference>
<dbReference type="FunFam" id="3.40.50.300:FF:000761">
    <property type="entry name" value="Thymidine kinase"/>
    <property type="match status" value="1"/>
</dbReference>
<dbReference type="Gene3D" id="3.30.60.20">
    <property type="match status" value="1"/>
</dbReference>
<dbReference type="Gene3D" id="3.40.50.300">
    <property type="entry name" value="P-loop containing nucleotide triphosphate hydrolases"/>
    <property type="match status" value="1"/>
</dbReference>
<dbReference type="InterPro" id="IPR027417">
    <property type="entry name" value="P-loop_NTPase"/>
</dbReference>
<dbReference type="InterPro" id="IPR001267">
    <property type="entry name" value="Thymidine_kinase"/>
</dbReference>
<dbReference type="InterPro" id="IPR020633">
    <property type="entry name" value="Thymidine_kinase_CS"/>
</dbReference>
<dbReference type="PANTHER" id="PTHR11441">
    <property type="entry name" value="THYMIDINE KINASE"/>
    <property type="match status" value="1"/>
</dbReference>
<dbReference type="PANTHER" id="PTHR11441:SF0">
    <property type="entry name" value="THYMIDINE KINASE, CYTOSOLIC"/>
    <property type="match status" value="1"/>
</dbReference>
<dbReference type="Pfam" id="PF00265">
    <property type="entry name" value="TK"/>
    <property type="match status" value="1"/>
</dbReference>
<dbReference type="PIRSF" id="PIRSF035805">
    <property type="entry name" value="TK_cell"/>
    <property type="match status" value="1"/>
</dbReference>
<dbReference type="SUPFAM" id="SSF57716">
    <property type="entry name" value="Glucocorticoid receptor-like (DNA-binding domain)"/>
    <property type="match status" value="1"/>
</dbReference>
<dbReference type="SUPFAM" id="SSF52540">
    <property type="entry name" value="P-loop containing nucleoside triphosphate hydrolases"/>
    <property type="match status" value="1"/>
</dbReference>
<dbReference type="PROSITE" id="PS00603">
    <property type="entry name" value="TK_CELLULAR_TYPE"/>
    <property type="match status" value="1"/>
</dbReference>
<reference key="1">
    <citation type="journal article" date="1985" name="Nucleic Acids Res.">
        <title>Nucleotide sequence of a cluster of early and late genes in a conserved segment of the vaccinia virus genome.</title>
        <authorList>
            <person name="Plucienniczak A."/>
            <person name="Schroeder E."/>
            <person name="Zettlmeissl G."/>
            <person name="Streeck R.E."/>
        </authorList>
    </citation>
    <scope>NUCLEOTIDE SEQUENCE [GENOMIC DNA]</scope>
</reference>
<reference key="2">
    <citation type="journal article" date="1983" name="J. Virol.">
        <title>Nucleotide sequence of the vaccinia virus thymidine kinase gene and the nature of spontaneous frameshift mutations.</title>
        <authorList>
            <person name="Weir J.P."/>
            <person name="Moss B."/>
        </authorList>
    </citation>
    <scope>NUCLEOTIDE SEQUENCE [GENOMIC DNA]</scope>
</reference>
<reference key="3">
    <citation type="journal article" date="1983" name="Proc. Natl. Acad. Sci. U.S.A.">
        <title>Fine structure analysis and nucleotide sequence of the vaccinia virus thymidine kinase gene.</title>
        <authorList>
            <person name="Hruby D.E."/>
            <person name="Maki R.A."/>
            <person name="Miller D.B."/>
            <person name="Ball L.A."/>
        </authorList>
    </citation>
    <scope>NUCLEOTIDE SEQUENCE [GENOMIC DNA]</scope>
</reference>
<reference key="4">
    <citation type="submission" date="2003-02" db="EMBL/GenBank/DDBJ databases">
        <title>Sequencing of the coding region of Vaccinia-WR to an average 9-fold redundancy and an error rate of 0.16/10kb.</title>
        <authorList>
            <person name="Esposito J.J."/>
            <person name="Frace A.M."/>
            <person name="Sammons S.A."/>
            <person name="Olsen-Rasmussen M."/>
            <person name="Osborne J."/>
            <person name="Wohlhueter R."/>
        </authorList>
    </citation>
    <scope>NUCLEOTIDE SEQUENCE [LARGE SCALE GENOMIC DNA]</scope>
</reference>
<reference key="5">
    <citation type="journal article" date="2007" name="J. Virol. Methods">
        <title>Biophysical characterization of vaccinia virus thymidine kinase substrate utilization.</title>
        <authorList>
            <person name="Smith R.F."/>
            <person name="Freyer M.W."/>
            <person name="Lewis E.A."/>
        </authorList>
    </citation>
    <scope>BIOPHYSICOCHEMICAL PROPERTIES</scope>
</reference>
<gene>
    <name type="primary">OPG101</name>
    <name type="synonym">TK</name>
    <name type="ordered locus">VACWR094</name>
    <name type="ORF">J2R</name>
</gene>
<sequence length="177" mass="20100">MNGGHIQLIIGPMFSGKSTELIRRVRRYQIAQYKCVTIKYSNDNRYGTGLWTHDKNNFEALEATKLCDVLESITDFSVIGIDEGQFFPDIVEFCERMANEGKIVIVAALDGTFQRKPFNNILNLIPLSEMVVKLTAVCMKCFKEASFSKRLGEETEIEIIGGNDMYQSVCRKCYIDS</sequence>